<proteinExistence type="inferred from homology"/>
<feature type="chain" id="PRO_0000129251" description="Large ribosomal subunit protein uL4">
    <location>
        <begin position="1"/>
        <end position="207"/>
    </location>
</feature>
<feature type="region of interest" description="Disordered" evidence="2">
    <location>
        <begin position="45"/>
        <end position="80"/>
    </location>
</feature>
<feature type="compositionally biased region" description="Basic residues" evidence="2">
    <location>
        <begin position="60"/>
        <end position="71"/>
    </location>
</feature>
<protein>
    <recommendedName>
        <fullName evidence="1">Large ribosomal subunit protein uL4</fullName>
    </recommendedName>
    <alternativeName>
        <fullName evidence="3">50S ribosomal protein L4</fullName>
    </alternativeName>
</protein>
<accession>Q8ETY1</accession>
<comment type="function">
    <text evidence="1">One of the primary rRNA binding proteins, this protein initially binds near the 5'-end of the 23S rRNA. It is important during the early stages of 50S assembly. It makes multiple contacts with different domains of the 23S rRNA in the assembled 50S subunit and ribosome.</text>
</comment>
<comment type="function">
    <text evidence="1">Forms part of the polypeptide exit tunnel.</text>
</comment>
<comment type="subunit">
    <text evidence="1">Part of the 50S ribosomal subunit.</text>
</comment>
<comment type="similarity">
    <text evidence="1">Belongs to the universal ribosomal protein uL4 family.</text>
</comment>
<dbReference type="EMBL" id="BA000028">
    <property type="protein sequence ID" value="BAC12076.1"/>
    <property type="molecule type" value="Genomic_DNA"/>
</dbReference>
<dbReference type="RefSeq" id="WP_011064523.1">
    <property type="nucleotide sequence ID" value="NC_004193.1"/>
</dbReference>
<dbReference type="SMR" id="Q8ETY1"/>
<dbReference type="STRING" id="221109.gene:10732310"/>
<dbReference type="KEGG" id="oih:OB0120"/>
<dbReference type="eggNOG" id="COG0088">
    <property type="taxonomic scope" value="Bacteria"/>
</dbReference>
<dbReference type="HOGENOM" id="CLU_041575_5_2_9"/>
<dbReference type="OrthoDB" id="9803201at2"/>
<dbReference type="PhylomeDB" id="Q8ETY1"/>
<dbReference type="Proteomes" id="UP000000822">
    <property type="component" value="Chromosome"/>
</dbReference>
<dbReference type="GO" id="GO:1990904">
    <property type="term" value="C:ribonucleoprotein complex"/>
    <property type="evidence" value="ECO:0007669"/>
    <property type="project" value="UniProtKB-KW"/>
</dbReference>
<dbReference type="GO" id="GO:0005840">
    <property type="term" value="C:ribosome"/>
    <property type="evidence" value="ECO:0007669"/>
    <property type="project" value="UniProtKB-KW"/>
</dbReference>
<dbReference type="GO" id="GO:0019843">
    <property type="term" value="F:rRNA binding"/>
    <property type="evidence" value="ECO:0007669"/>
    <property type="project" value="UniProtKB-UniRule"/>
</dbReference>
<dbReference type="GO" id="GO:0003735">
    <property type="term" value="F:structural constituent of ribosome"/>
    <property type="evidence" value="ECO:0007669"/>
    <property type="project" value="InterPro"/>
</dbReference>
<dbReference type="GO" id="GO:0006412">
    <property type="term" value="P:translation"/>
    <property type="evidence" value="ECO:0007669"/>
    <property type="project" value="UniProtKB-UniRule"/>
</dbReference>
<dbReference type="FunFam" id="3.40.1370.10:FF:000003">
    <property type="entry name" value="50S ribosomal protein L4"/>
    <property type="match status" value="1"/>
</dbReference>
<dbReference type="Gene3D" id="3.40.1370.10">
    <property type="match status" value="1"/>
</dbReference>
<dbReference type="HAMAP" id="MF_01328_B">
    <property type="entry name" value="Ribosomal_uL4_B"/>
    <property type="match status" value="1"/>
</dbReference>
<dbReference type="InterPro" id="IPR002136">
    <property type="entry name" value="Ribosomal_uL4"/>
</dbReference>
<dbReference type="InterPro" id="IPR013005">
    <property type="entry name" value="Ribosomal_uL4-like"/>
</dbReference>
<dbReference type="InterPro" id="IPR023574">
    <property type="entry name" value="Ribosomal_uL4_dom_sf"/>
</dbReference>
<dbReference type="NCBIfam" id="TIGR03953">
    <property type="entry name" value="rplD_bact"/>
    <property type="match status" value="1"/>
</dbReference>
<dbReference type="PANTHER" id="PTHR10746">
    <property type="entry name" value="50S RIBOSOMAL PROTEIN L4"/>
    <property type="match status" value="1"/>
</dbReference>
<dbReference type="PANTHER" id="PTHR10746:SF6">
    <property type="entry name" value="LARGE RIBOSOMAL SUBUNIT PROTEIN UL4M"/>
    <property type="match status" value="1"/>
</dbReference>
<dbReference type="Pfam" id="PF00573">
    <property type="entry name" value="Ribosomal_L4"/>
    <property type="match status" value="1"/>
</dbReference>
<dbReference type="SUPFAM" id="SSF52166">
    <property type="entry name" value="Ribosomal protein L4"/>
    <property type="match status" value="1"/>
</dbReference>
<keyword id="KW-1185">Reference proteome</keyword>
<keyword id="KW-0687">Ribonucleoprotein</keyword>
<keyword id="KW-0689">Ribosomal protein</keyword>
<keyword id="KW-0694">RNA-binding</keyword>
<keyword id="KW-0699">rRNA-binding</keyword>
<evidence type="ECO:0000255" key="1">
    <source>
        <dbReference type="HAMAP-Rule" id="MF_01328"/>
    </source>
</evidence>
<evidence type="ECO:0000256" key="2">
    <source>
        <dbReference type="SAM" id="MobiDB-lite"/>
    </source>
</evidence>
<evidence type="ECO:0000305" key="3"/>
<reference key="1">
    <citation type="journal article" date="2002" name="Nucleic Acids Res.">
        <title>Genome sequence of Oceanobacillus iheyensis isolated from the Iheya Ridge and its unexpected adaptive capabilities to extreme environments.</title>
        <authorList>
            <person name="Takami H."/>
            <person name="Takaki Y."/>
            <person name="Uchiyama I."/>
        </authorList>
    </citation>
    <scope>NUCLEOTIDE SEQUENCE [LARGE SCALE GENOMIC DNA]</scope>
    <source>
        <strain>DSM 14371 / CIP 107618 / JCM 11309 / KCTC 3954 / HTE831</strain>
    </source>
</reference>
<name>RL4_OCEIH</name>
<gene>
    <name evidence="1" type="primary">rplD</name>
    <name type="ordered locus">OB0120</name>
</gene>
<organism>
    <name type="scientific">Oceanobacillus iheyensis (strain DSM 14371 / CIP 107618 / JCM 11309 / KCTC 3954 / HTE831)</name>
    <dbReference type="NCBI Taxonomy" id="221109"/>
    <lineage>
        <taxon>Bacteria</taxon>
        <taxon>Bacillati</taxon>
        <taxon>Bacillota</taxon>
        <taxon>Bacilli</taxon>
        <taxon>Bacillales</taxon>
        <taxon>Bacillaceae</taxon>
        <taxon>Oceanobacillus</taxon>
    </lineage>
</organism>
<sequence length="207" mass="22659">MPKVALLKQDGSNVGDIELNDSVFGIEPNTHVLHEAVVMQRASLRQGTHAVKNRSEVRGGGRKPWRQKGTGRARQGSTRSPQWVGGGTVFGPTPRSYSYKLPKKVRRLALRSALSSKVNEESLLVLENISIDAPKTKEIVNILKGLQVDAKALIVLSEKDETVIRSANNLQNVTVLTVEELNILDLLMHDKLIITKDAAEKAGEVLA</sequence>